<feature type="initiator methionine" description="Removed" evidence="1">
    <location>
        <position position="1"/>
    </location>
</feature>
<feature type="chain" id="PRO_0000307388" description="Histone H4">
    <location>
        <begin position="2"/>
        <end position="103"/>
    </location>
</feature>
<feature type="DNA-binding region" evidence="1">
    <location>
        <begin position="17"/>
        <end position="21"/>
    </location>
</feature>
<feature type="region of interest" description="Disordered" evidence="4">
    <location>
        <begin position="1"/>
        <end position="20"/>
    </location>
</feature>
<feature type="compositionally biased region" description="Gly residues" evidence="4">
    <location>
        <begin position="1"/>
        <end position="14"/>
    </location>
</feature>
<feature type="modified residue" description="N-acetylserine" evidence="2">
    <location>
        <position position="2"/>
    </location>
</feature>
<feature type="modified residue" description="Phosphoserine" evidence="2">
    <location>
        <position position="2"/>
    </location>
</feature>
<feature type="modified residue" description="Asymmetric dimethylarginine; by PRMT1; alternate" evidence="2">
    <location>
        <position position="4"/>
    </location>
</feature>
<feature type="modified residue" description="Citrulline; alternate" evidence="2">
    <location>
        <position position="4"/>
    </location>
</feature>
<feature type="modified residue" description="Omega-N-methylarginine; by PRMT1; alternate" evidence="2">
    <location>
        <position position="4"/>
    </location>
</feature>
<feature type="modified residue" description="Symmetric dimethylarginine; by PRMT5 and PRMT7; alternate" evidence="2">
    <location>
        <position position="4"/>
    </location>
</feature>
<feature type="modified residue" description="N6-(2-hydroxyisobutyryl)lysine; alternate" evidence="2">
    <location>
        <position position="6"/>
    </location>
</feature>
<feature type="modified residue" description="N6-acetyl-N6-methyllysine; alternate" evidence="2">
    <location>
        <position position="6"/>
    </location>
</feature>
<feature type="modified residue" description="N6-acetyllysine" evidence="2">
    <location>
        <position position="6"/>
    </location>
</feature>
<feature type="modified residue" description="N6-butyryllysine; alternate" evidence="2">
    <location>
        <position position="6"/>
    </location>
</feature>
<feature type="modified residue" description="N6-glutaryllysine; alternate" evidence="2">
    <location>
        <position position="6"/>
    </location>
</feature>
<feature type="modified residue" description="N6-lactoyllysine; alternate" evidence="2">
    <location>
        <position position="6"/>
    </location>
</feature>
<feature type="modified residue" description="N6-(2-hydroxyisobutyryl)lysine; alternate" evidence="2">
    <location>
        <position position="9"/>
    </location>
</feature>
<feature type="modified residue" description="N6-acetyllysine" evidence="2">
    <location>
        <position position="9"/>
    </location>
</feature>
<feature type="modified residue" description="N6-butyryllysine; alternate" evidence="2">
    <location>
        <position position="9"/>
    </location>
</feature>
<feature type="modified residue" description="N6-lactoyllysine; alternate" evidence="2">
    <location>
        <position position="9"/>
    </location>
</feature>
<feature type="modified residue" description="N6-propionyllysine; alternate" evidence="2">
    <location>
        <position position="9"/>
    </location>
</feature>
<feature type="modified residue" description="N6-(2-hydroxyisobutyryl)lysine; alternate" evidence="2">
    <location>
        <position position="13"/>
    </location>
</feature>
<feature type="modified residue" description="N6-acetyl-N6-methyllysine; alternate" evidence="2">
    <location>
        <position position="13"/>
    </location>
</feature>
<feature type="modified residue" description="N6-acetyllysine" evidence="2">
    <location>
        <position position="13"/>
    </location>
</feature>
<feature type="modified residue" description="N6-butyryllysine; alternate" evidence="2">
    <location>
        <position position="13"/>
    </location>
</feature>
<feature type="modified residue" description="N6-glutaryllysine; alternate" evidence="2">
    <location>
        <position position="13"/>
    </location>
</feature>
<feature type="modified residue" description="N6-lactoyllysine; alternate" evidence="2">
    <location>
        <position position="13"/>
    </location>
</feature>
<feature type="modified residue" description="N6-methyllysine; alternate" evidence="2">
    <location>
        <position position="13"/>
    </location>
</feature>
<feature type="modified residue" description="N6-(2-hydroxyisobutyryl)lysine; alternate" evidence="2">
    <location>
        <position position="17"/>
    </location>
</feature>
<feature type="modified residue" description="N6-acetyllysine" evidence="2">
    <location>
        <position position="17"/>
    </location>
</feature>
<feature type="modified residue" description="N6-butyryllysine; alternate" evidence="2">
    <location>
        <position position="17"/>
    </location>
</feature>
<feature type="modified residue" description="N6-lactoyllysine; alternate" evidence="2">
    <location>
        <position position="17"/>
    </location>
</feature>
<feature type="modified residue" description="N6-propionyllysine; alternate" evidence="2">
    <location>
        <position position="17"/>
    </location>
</feature>
<feature type="modified residue" description="N6,N6,N6-trimethyllysine; alternate" evidence="2">
    <location>
        <position position="21"/>
    </location>
</feature>
<feature type="modified residue" description="N6,N6-dimethyllysine; alternate" evidence="2">
    <location>
        <position position="21"/>
    </location>
</feature>
<feature type="modified residue" description="N6-methyllysine; alternate" evidence="2">
    <location>
        <position position="21"/>
    </location>
</feature>
<feature type="modified residue" description="N6-(2-hydroxyisobutyryl)lysine; alternate" evidence="2">
    <location>
        <position position="32"/>
    </location>
</feature>
<feature type="modified residue" description="N6-acetyllysine" evidence="2">
    <location>
        <position position="32"/>
    </location>
</feature>
<feature type="modified residue" description="N6-butyryllysine; alternate" evidence="2">
    <location>
        <position position="32"/>
    </location>
</feature>
<feature type="modified residue" description="N6-glutaryllysine; alternate" evidence="2">
    <location>
        <position position="32"/>
    </location>
</feature>
<feature type="modified residue" description="N6-lactoyllysine; alternate" evidence="2">
    <location>
        <position position="32"/>
    </location>
</feature>
<feature type="modified residue" description="N6-propionyllysine; alternate" evidence="2">
    <location>
        <position position="32"/>
    </location>
</feature>
<feature type="modified residue" description="N6-succinyllysine; alternate" evidence="2">
    <location>
        <position position="32"/>
    </location>
</feature>
<feature type="modified residue" description="N6-(2-hydroxyisobutyryl)lysine; alternate" evidence="2">
    <location>
        <position position="45"/>
    </location>
</feature>
<feature type="modified residue" description="N6-butyryllysine; alternate" evidence="2">
    <location>
        <position position="45"/>
    </location>
</feature>
<feature type="modified residue" description="N6-propionyllysine; alternate" evidence="2">
    <location>
        <position position="45"/>
    </location>
</feature>
<feature type="modified residue" description="Phosphoserine; by PAK2" evidence="2">
    <location>
        <position position="48"/>
    </location>
</feature>
<feature type="modified residue" description="Phosphotyrosine" evidence="2">
    <location>
        <position position="52"/>
    </location>
</feature>
<feature type="modified residue" description="N6-(2-hydroxyisobutyryl)lysine" evidence="2">
    <location>
        <position position="60"/>
    </location>
</feature>
<feature type="modified residue" description="N6-acetyllysine" evidence="2">
    <location>
        <position position="60"/>
    </location>
</feature>
<feature type="modified residue" description="N6-glutaryllysine; alternate" evidence="2">
    <location>
        <position position="60"/>
    </location>
</feature>
<feature type="modified residue" description="N6-(2-hydroxyisobutyryl)lysine; alternate" evidence="2">
    <location>
        <position position="78"/>
    </location>
</feature>
<feature type="modified residue" description="N6-butyryllysine; alternate" evidence="2">
    <location>
        <position position="78"/>
    </location>
</feature>
<feature type="modified residue" description="N6-glutaryllysine; alternate" evidence="2">
    <location>
        <position position="78"/>
    </location>
</feature>
<feature type="modified residue" description="N6-lactoyllysine; alternate" evidence="2">
    <location>
        <position position="78"/>
    </location>
</feature>
<feature type="modified residue" description="N6-propionyllysine; alternate" evidence="2">
    <location>
        <position position="78"/>
    </location>
</feature>
<feature type="modified residue" description="N6-succinyllysine" evidence="2">
    <location>
        <position position="78"/>
    </location>
</feature>
<feature type="modified residue" description="N6-(2-hydroxyisobutyryl)lysine; alternate" evidence="2">
    <location>
        <position position="80"/>
    </location>
</feature>
<feature type="modified residue" description="N6-acetyllysine" evidence="2">
    <location>
        <position position="80"/>
    </location>
</feature>
<feature type="modified residue" description="N6-butyryllysine; alternate" evidence="2">
    <location>
        <position position="80"/>
    </location>
</feature>
<feature type="modified residue" description="N6-glutaryllysine; alternate" evidence="2">
    <location>
        <position position="80"/>
    </location>
</feature>
<feature type="modified residue" description="N6-propionyllysine; alternate" evidence="2">
    <location>
        <position position="80"/>
    </location>
</feature>
<feature type="modified residue" description="Phosphotyrosine" evidence="2">
    <location>
        <position position="89"/>
    </location>
</feature>
<feature type="modified residue" description="N6-(2-hydroxyisobutyryl)lysine; alternate" evidence="2">
    <location>
        <position position="92"/>
    </location>
</feature>
<feature type="modified residue" description="N6-acetyllysine; alternate" evidence="2">
    <location>
        <position position="92"/>
    </location>
</feature>
<feature type="modified residue" description="N6-butyryllysine; alternate" evidence="2">
    <location>
        <position position="92"/>
    </location>
</feature>
<feature type="modified residue" description="N6-glutaryllysine; alternate" evidence="2">
    <location>
        <position position="92"/>
    </location>
</feature>
<feature type="modified residue" description="N6-lactoyllysine; alternate" evidence="2">
    <location>
        <position position="92"/>
    </location>
</feature>
<feature type="modified residue" description="N6-propionyllysine; alternate" evidence="2">
    <location>
        <position position="92"/>
    </location>
</feature>
<feature type="modified residue" description="N6-succinyllysine; alternate" evidence="2">
    <location>
        <position position="92"/>
    </location>
</feature>
<feature type="cross-link" description="Glycyl lysine isopeptide (Lys-Gly) (interchain with G-Cter in UFM1); alternate" evidence="2">
    <location>
        <position position="32"/>
    </location>
</feature>
<feature type="cross-link" description="Glycyl lysine isopeptide (Lys-Gly) (interchain with G-Cter in ubiquitin); alternate" evidence="2">
    <location>
        <position position="92"/>
    </location>
</feature>
<organism>
    <name type="scientific">Xenopus tropicalis</name>
    <name type="common">Western clawed frog</name>
    <name type="synonym">Silurana tropicalis</name>
    <dbReference type="NCBI Taxonomy" id="8364"/>
    <lineage>
        <taxon>Eukaryota</taxon>
        <taxon>Metazoa</taxon>
        <taxon>Chordata</taxon>
        <taxon>Craniata</taxon>
        <taxon>Vertebrata</taxon>
        <taxon>Euteleostomi</taxon>
        <taxon>Amphibia</taxon>
        <taxon>Batrachia</taxon>
        <taxon>Anura</taxon>
        <taxon>Pipoidea</taxon>
        <taxon>Pipidae</taxon>
        <taxon>Xenopodinae</taxon>
        <taxon>Xenopus</taxon>
        <taxon>Silurana</taxon>
    </lineage>
</organism>
<gene>
    <name type="ORF">TGas006m08.1</name>
</gene>
<comment type="function">
    <text evidence="1">Core component of nucleosome. Nucleosomes wrap and compact DNA into chromatin, limiting DNA accessibility to the cellular machineries which require DNA as a template. Histones thereby play a central role in transcription regulation, DNA repair, DNA replication and chromosomal stability. DNA accessibility is regulated via a complex set of post-translational modifications of histones, also called histone code, and nucleosome remodeling (By similarity).</text>
</comment>
<comment type="subunit">
    <text evidence="1">The nucleosome is a histone octamer containing two molecules each of H2A, H2B, H3 and H4 assembled in one H3-H4 heterotetramer and two H2A-H2B heterodimers. The octamer wraps approximately 147 bp of DNA (By similarity).</text>
</comment>
<comment type="subcellular location">
    <subcellularLocation>
        <location evidence="1">Nucleus</location>
    </subcellularLocation>
    <subcellularLocation>
        <location evidence="1">Chromosome</location>
    </subcellularLocation>
</comment>
<comment type="PTM">
    <text evidence="2">Acetylation at Lys-6 (H4K5ac), Lys-9 (H4K8ac), Lys-13 (H4K12ac) and Lys-17 (H4K16ac) occurs in coding regions of the genome but not in heterochromatin.</text>
</comment>
<comment type="PTM">
    <text evidence="2">Citrullination at Arg-4 (H4R3ci) by PADI4 impairs methylation.</text>
</comment>
<comment type="PTM">
    <text evidence="2">Monomethylation and asymmetric dimethylation at Arg-4 (H4R3me1 and H4R3me2a, respectively) by PRMT1 favors acetylation at Lys-9 (H4K8ac) and Lys-13 (H4K12ac). Demethylation is performed by JMJD6. Symmetric dimethylation on Arg-4 (H4R3me2s) by the PRDM1/PRMT5 complex may play a crucial role in the germ-cell lineage (By similarity).</text>
</comment>
<comment type="PTM">
    <text evidence="2">Monomethylated, dimethylated or trimethylated at Lys-21 (H4K20me1, H4K20me2, H4K20me3). Monomethylation is performed by KMT5A/SET8. Trimethylation is performed by KMT5B and KMT5C and induces gene silencing. Monomethylated at Lys-13 (H4K12me1) by N6AMT1; H4K12me1 modification is present at the promoters of numerous genes encoding cell cycle regulators.</text>
</comment>
<comment type="PTM">
    <text evidence="2">Acetyl-methylated at Lys-6 and Lys-13 (H4K5acme and H4K12acme, respectively), acetyl-methylation is an epigenetic mark of active chromatin associated with increased transcriptional initiation. Acetyl-methylation is formed by acetylation by EP300/p300 of lysine residues that are already monomethylated on the same side chain. H4K5acme and H4K12acme marks specifically bind BRD2.</text>
</comment>
<comment type="PTM">
    <text evidence="2">Phosphorylated by pak2 at Ser-48 (H4S47ph). This phosphorylation increases the association of H3.3-H4 with the histone chaperone HIRA, thus promoting nucleosome assembly of H3.3-H4 and inhibiting nucleosome assembly of H3.1-H4 (By similarity).</text>
</comment>
<comment type="PTM">
    <text evidence="2">Ubiquitinated by the CUL4-DDB-RBX1 complex in response to ultraviolet irradiation. This may weaken the interaction between histones and DNA and facilitate DNA accessibility to repair proteins. Monoubiquitinated at Lys-92 of histone H4 (H4K91ub1) in response to DNA damage. The exact role of H4K91ub1 in DNA damage response is still unclear but it may function as a licensing signal for additional histone H4 post-translational modifications such as H4 Lys-21 methylation (H4K20me) (By similarity).</text>
</comment>
<comment type="PTM">
    <text evidence="2">Sumoylated, which is associated with transcriptional repression.</text>
</comment>
<comment type="PTM">
    <text evidence="3">Butyrylation of histones marks active promoters and competes with histone acetylation.</text>
</comment>
<comment type="PTM">
    <text evidence="2">Glutarylation at Lys-92 (H4K91glu) destabilizes nucleosomes by promoting dissociation of the H2A-H2B dimers from nucleosomes.</text>
</comment>
<comment type="PTM">
    <text evidence="2">Ufmylated; monofmylated by UFL1 at Lys-32 (H4K31Ufm1) in response to DNA damage.</text>
</comment>
<comment type="PTM">
    <text evidence="2">Lactylated in macrophages by EP300/P300 by using lactoyl-CoA directly derived from endogenous or exogenous lactate, leading to stimulates gene transcription. Delactylated by SIRT3 at Lys-17 (H4K16la).</text>
</comment>
<comment type="similarity">
    <text evidence="5">Belongs to the histone H4 family.</text>
</comment>
<name>H4_XENTR</name>
<evidence type="ECO:0000250" key="1"/>
<evidence type="ECO:0000250" key="2">
    <source>
        <dbReference type="UniProtKB" id="P62805"/>
    </source>
</evidence>
<evidence type="ECO:0000250" key="3">
    <source>
        <dbReference type="UniProtKB" id="P62806"/>
    </source>
</evidence>
<evidence type="ECO:0000256" key="4">
    <source>
        <dbReference type="SAM" id="MobiDB-lite"/>
    </source>
</evidence>
<evidence type="ECO:0000305" key="5"/>
<reference key="1">
    <citation type="submission" date="2006-10" db="EMBL/GenBank/DDBJ databases">
        <authorList>
            <consortium name="Sanger Xenopus tropicalis EST/cDNA project"/>
        </authorList>
    </citation>
    <scope>NUCLEOTIDE SEQUENCE [LARGE SCALE MRNA]</scope>
    <source>
        <tissue>Gastrula</tissue>
    </source>
</reference>
<keyword id="KW-0007">Acetylation</keyword>
<keyword id="KW-0158">Chromosome</keyword>
<keyword id="KW-0164">Citrullination</keyword>
<keyword id="KW-0238">DNA-binding</keyword>
<keyword id="KW-0379">Hydroxylation</keyword>
<keyword id="KW-1017">Isopeptide bond</keyword>
<keyword id="KW-0488">Methylation</keyword>
<keyword id="KW-0544">Nucleosome core</keyword>
<keyword id="KW-0539">Nucleus</keyword>
<keyword id="KW-0597">Phosphoprotein</keyword>
<keyword id="KW-1185">Reference proteome</keyword>
<keyword id="KW-0832">Ubl conjugation</keyword>
<protein>
    <recommendedName>
        <fullName>Histone H4</fullName>
    </recommendedName>
</protein>
<proteinExistence type="inferred from homology"/>
<dbReference type="EMBL" id="CR848633">
    <property type="protein sequence ID" value="CAJ83618.1"/>
    <property type="molecule type" value="mRNA"/>
</dbReference>
<dbReference type="RefSeq" id="XP_002933940.1">
    <property type="nucleotide sequence ID" value="XM_002933894.4"/>
</dbReference>
<dbReference type="RefSeq" id="XP_002943144.1">
    <property type="nucleotide sequence ID" value="XM_002943098.4"/>
</dbReference>
<dbReference type="RefSeq" id="XP_004917053.1">
    <property type="nucleotide sequence ID" value="XM_004916996.3"/>
</dbReference>
<dbReference type="RefSeq" id="XP_004917064.1">
    <property type="nucleotide sequence ID" value="XM_004917007.3"/>
</dbReference>
<dbReference type="RefSeq" id="XP_012817506.1">
    <property type="nucleotide sequence ID" value="XM_012962052.2"/>
</dbReference>
<dbReference type="RefSeq" id="XP_017945705.1">
    <property type="nucleotide sequence ID" value="XM_018090216.1"/>
</dbReference>
<dbReference type="RefSeq" id="XP_017952915.1">
    <property type="nucleotide sequence ID" value="XM_018097426.1"/>
</dbReference>
<dbReference type="SMR" id="Q28DR4"/>
<dbReference type="FunCoup" id="Q28DR4">
    <property type="interactions" value="1215"/>
</dbReference>
<dbReference type="STRING" id="8364.ENSXETP00000003471"/>
<dbReference type="PaxDb" id="8364-ENSXETP00000001377"/>
<dbReference type="KEGG" id="xtr:100485962"/>
<dbReference type="KEGG" id="xtr:100488032"/>
<dbReference type="KEGG" id="xtr:100495184"/>
<dbReference type="KEGG" id="xtr:101732103"/>
<dbReference type="KEGG" id="xtr:101732638"/>
<dbReference type="KEGG" id="xtr:101733182"/>
<dbReference type="KEGG" id="xtr:101734426"/>
<dbReference type="KEGG" id="xtr:105947139"/>
<dbReference type="KEGG" id="xtr:108646289"/>
<dbReference type="KEGG" id="xtr:108646290"/>
<dbReference type="KEGG" id="xtr:108646291"/>
<dbReference type="KEGG" id="xtr:549623"/>
<dbReference type="AGR" id="Xenbase:XB-GENE-5724689"/>
<dbReference type="CTD" id="8359"/>
<dbReference type="CTD" id="8364"/>
<dbReference type="Xenbase" id="XB-GENE-5724689">
    <property type="gene designation" value="h4c1"/>
</dbReference>
<dbReference type="eggNOG" id="KOG3467">
    <property type="taxonomic scope" value="Eukaryota"/>
</dbReference>
<dbReference type="HOGENOM" id="CLU_109117_2_3_1"/>
<dbReference type="InParanoid" id="Q28DR4"/>
<dbReference type="OMA" id="QKEHING"/>
<dbReference type="OrthoDB" id="9830922at2759"/>
<dbReference type="PhylomeDB" id="Q28DR4"/>
<dbReference type="Proteomes" id="UP000008143">
    <property type="component" value="Chromosome 3"/>
</dbReference>
<dbReference type="Proteomes" id="UP000008143">
    <property type="component" value="Chromosome 9"/>
</dbReference>
<dbReference type="Bgee" id="ENSXETG00000038329">
    <property type="expression patterns" value="Expressed in egg cell and 12 other cell types or tissues"/>
</dbReference>
<dbReference type="ExpressionAtlas" id="Q28DR4">
    <property type="expression patterns" value="baseline and differential"/>
</dbReference>
<dbReference type="GO" id="GO:0000786">
    <property type="term" value="C:nucleosome"/>
    <property type="evidence" value="ECO:0007669"/>
    <property type="project" value="UniProtKB-KW"/>
</dbReference>
<dbReference type="GO" id="GO:0005634">
    <property type="term" value="C:nucleus"/>
    <property type="evidence" value="ECO:0007669"/>
    <property type="project" value="UniProtKB-SubCell"/>
</dbReference>
<dbReference type="GO" id="GO:0003677">
    <property type="term" value="F:DNA binding"/>
    <property type="evidence" value="ECO:0007669"/>
    <property type="project" value="UniProtKB-KW"/>
</dbReference>
<dbReference type="GO" id="GO:0046982">
    <property type="term" value="F:protein heterodimerization activity"/>
    <property type="evidence" value="ECO:0007669"/>
    <property type="project" value="InterPro"/>
</dbReference>
<dbReference type="GO" id="GO:0030527">
    <property type="term" value="F:structural constituent of chromatin"/>
    <property type="evidence" value="ECO:0007669"/>
    <property type="project" value="InterPro"/>
</dbReference>
<dbReference type="CDD" id="cd22912">
    <property type="entry name" value="HFD_H4"/>
    <property type="match status" value="1"/>
</dbReference>
<dbReference type="FunFam" id="1.10.20.10:FF:000002">
    <property type="entry name" value="Histone H4"/>
    <property type="match status" value="1"/>
</dbReference>
<dbReference type="Gene3D" id="1.10.20.10">
    <property type="entry name" value="Histone, subunit A"/>
    <property type="match status" value="1"/>
</dbReference>
<dbReference type="InterPro" id="IPR035425">
    <property type="entry name" value="CENP-T/H4_C"/>
</dbReference>
<dbReference type="InterPro" id="IPR009072">
    <property type="entry name" value="Histone-fold"/>
</dbReference>
<dbReference type="InterPro" id="IPR001951">
    <property type="entry name" value="Histone_H4"/>
</dbReference>
<dbReference type="InterPro" id="IPR019809">
    <property type="entry name" value="Histone_H4_CS"/>
</dbReference>
<dbReference type="InterPro" id="IPR004823">
    <property type="entry name" value="TAF_TATA-bd_Histone-like_dom"/>
</dbReference>
<dbReference type="PANTHER" id="PTHR10484">
    <property type="entry name" value="HISTONE H4"/>
    <property type="match status" value="1"/>
</dbReference>
<dbReference type="Pfam" id="PF15511">
    <property type="entry name" value="CENP-T_C"/>
    <property type="match status" value="1"/>
</dbReference>
<dbReference type="PRINTS" id="PR00623">
    <property type="entry name" value="HISTONEH4"/>
</dbReference>
<dbReference type="SMART" id="SM00417">
    <property type="entry name" value="H4"/>
    <property type="match status" value="1"/>
</dbReference>
<dbReference type="SMART" id="SM00803">
    <property type="entry name" value="TAF"/>
    <property type="match status" value="1"/>
</dbReference>
<dbReference type="SUPFAM" id="SSF47113">
    <property type="entry name" value="Histone-fold"/>
    <property type="match status" value="1"/>
</dbReference>
<dbReference type="PROSITE" id="PS00047">
    <property type="entry name" value="HISTONE_H4"/>
    <property type="match status" value="1"/>
</dbReference>
<sequence length="103" mass="11367">MSGRGKGGKGLGKGGAKRHRKVLRDNIQGITKPAIRRLARRGGVKRISGLIYEETRGVLKVFLENVIRDAVTYTEHAKRKTVTAMDVVYALKRQGRTLYGFGG</sequence>
<accession>Q28DR4</accession>